<name>TFKL4_HUMAN</name>
<gene>
    <name evidence="4" type="primary">TAF11L4</name>
</gene>
<feature type="chain" id="PRO_0000456144" description="TATA-box-binding protein-associated factor 11-like protein 4">
    <location>
        <begin position="1"/>
        <end position="198"/>
    </location>
</feature>
<feature type="region of interest" description="Disordered" evidence="1">
    <location>
        <begin position="1"/>
        <end position="91"/>
    </location>
</feature>
<feature type="compositionally biased region" description="Basic and acidic residues" evidence="1">
    <location>
        <begin position="38"/>
        <end position="50"/>
    </location>
</feature>
<feature type="compositionally biased region" description="Basic residues" evidence="1">
    <location>
        <begin position="69"/>
        <end position="78"/>
    </location>
</feature>
<feature type="compositionally biased region" description="Basic and acidic residues" evidence="1">
    <location>
        <begin position="79"/>
        <end position="91"/>
    </location>
</feature>
<comment type="tissue specificity">
    <text evidence="2">Expressed in fetal brain and testis.</text>
</comment>
<comment type="similarity">
    <text evidence="3">Belongs to the TAF11 family.</text>
</comment>
<protein>
    <recommendedName>
        <fullName evidence="3">TATA-box-binding protein-associated factor 11-like protein 4</fullName>
    </recommendedName>
</protein>
<organism>
    <name type="scientific">Homo sapiens</name>
    <name type="common">Human</name>
    <dbReference type="NCBI Taxonomy" id="9606"/>
    <lineage>
        <taxon>Eukaryota</taxon>
        <taxon>Metazoa</taxon>
        <taxon>Chordata</taxon>
        <taxon>Craniata</taxon>
        <taxon>Vertebrata</taxon>
        <taxon>Euteleostomi</taxon>
        <taxon>Mammalia</taxon>
        <taxon>Eutheria</taxon>
        <taxon>Euarchontoglires</taxon>
        <taxon>Primates</taxon>
        <taxon>Haplorrhini</taxon>
        <taxon>Catarrhini</taxon>
        <taxon>Hominidae</taxon>
        <taxon>Homo</taxon>
    </lineage>
</organism>
<accession>A0A1W2PPE2</accession>
<proteinExistence type="evidence at transcript level"/>
<sequence>METGRQTGVSAEMLAMPRGLKGSKKDGIPEDLDGNLEAPRDQEGELRSEDVMDLTEGDSEASASAPPAAKRRKTHTKGKKESKPTVDAEEAQRMTTLLSSMSEEQLSRYEVCRRSAFPRARVAGLMRAITGSSVSENAAIAMAGIAKLFVGEVVEEALDVCEMWGETPPLQPKHLREAVRRLKPKGLFPNSNCKRIMF</sequence>
<keyword id="KW-1185">Reference proteome</keyword>
<evidence type="ECO:0000256" key="1">
    <source>
        <dbReference type="SAM" id="MobiDB-lite"/>
    </source>
</evidence>
<evidence type="ECO:0000269" key="2">
    <source>
    </source>
</evidence>
<evidence type="ECO:0000305" key="3"/>
<evidence type="ECO:0000312" key="4">
    <source>
        <dbReference type="HGNC" id="HGNC:53847"/>
    </source>
</evidence>
<dbReference type="EMBL" id="AC106774">
    <property type="status" value="NOT_ANNOTATED_CDS"/>
    <property type="molecule type" value="Genomic_DNA"/>
</dbReference>
<dbReference type="CCDS" id="CCDS93690.1"/>
<dbReference type="RefSeq" id="NP_001388626.1">
    <property type="nucleotide sequence ID" value="NM_001401697.1"/>
</dbReference>
<dbReference type="SMR" id="A0A1W2PPE2"/>
<dbReference type="FunCoup" id="A0A1W2PPE2">
    <property type="interactions" value="61"/>
</dbReference>
<dbReference type="STRING" id="9606.ENSP00000491494"/>
<dbReference type="BioMuta" id="ENSG00000284283"/>
<dbReference type="MassIVE" id="A0A1W2PPE2"/>
<dbReference type="PeptideAtlas" id="A0A1W2PPE2"/>
<dbReference type="Ensembl" id="ENST00000638408.1">
    <property type="protein sequence ID" value="ENSP00000491494.1"/>
    <property type="gene ID" value="ENSG00000284283.1"/>
</dbReference>
<dbReference type="GeneID" id="391746"/>
<dbReference type="MANE-Select" id="ENST00000638408.1">
    <property type="protein sequence ID" value="ENSP00000491494.1"/>
    <property type="RefSeq nucleotide sequence ID" value="NM_001401697.1"/>
    <property type="RefSeq protein sequence ID" value="NP_001388626.1"/>
</dbReference>
<dbReference type="AGR" id="HGNC:53847"/>
<dbReference type="GeneCards" id="TAF11L4"/>
<dbReference type="HGNC" id="HGNC:53847">
    <property type="gene designation" value="TAF11L4"/>
</dbReference>
<dbReference type="HPA" id="ENSG00000284283">
    <property type="expression patterns" value="Not detected"/>
</dbReference>
<dbReference type="VEuPathDB" id="HostDB:ENSG00000284283"/>
<dbReference type="GeneTree" id="ENSGT00390000013228"/>
<dbReference type="InParanoid" id="A0A1W2PPE2"/>
<dbReference type="OMA" id="THRIPGH"/>
<dbReference type="PAN-GO" id="A0A1W2PPE2">
    <property type="GO annotations" value="3 GO annotations based on evolutionary models"/>
</dbReference>
<dbReference type="PRO" id="PR:A0A1W2PPE2"/>
<dbReference type="Proteomes" id="UP000005640">
    <property type="component" value="Chromosome 5"/>
</dbReference>
<dbReference type="RNAct" id="A0A1W2PPE2">
    <property type="molecule type" value="protein"/>
</dbReference>
<dbReference type="Bgee" id="ENSG00000284283">
    <property type="expression patterns" value="Expressed in hindlimb stylopod muscle and 6 other cell types or tissues"/>
</dbReference>
<dbReference type="GO" id="GO:0005669">
    <property type="term" value="C:transcription factor TFIID complex"/>
    <property type="evidence" value="ECO:0000318"/>
    <property type="project" value="GO_Central"/>
</dbReference>
<dbReference type="GO" id="GO:0046982">
    <property type="term" value="F:protein heterodimerization activity"/>
    <property type="evidence" value="ECO:0007669"/>
    <property type="project" value="InterPro"/>
</dbReference>
<dbReference type="GO" id="GO:0051123">
    <property type="term" value="P:RNA polymerase II preinitiation complex assembly"/>
    <property type="evidence" value="ECO:0000318"/>
    <property type="project" value="GO_Central"/>
</dbReference>
<dbReference type="CDD" id="cd08048">
    <property type="entry name" value="HFD_TAF11"/>
    <property type="match status" value="1"/>
</dbReference>
<dbReference type="FunFam" id="1.10.20.10:FF:000025">
    <property type="entry name" value="Transcription initiation factor TFIID subunit 11"/>
    <property type="match status" value="1"/>
</dbReference>
<dbReference type="Gene3D" id="1.10.20.10">
    <property type="entry name" value="Histone, subunit A"/>
    <property type="match status" value="1"/>
</dbReference>
<dbReference type="InterPro" id="IPR009072">
    <property type="entry name" value="Histone-fold"/>
</dbReference>
<dbReference type="InterPro" id="IPR045127">
    <property type="entry name" value="TAF11-like"/>
</dbReference>
<dbReference type="InterPro" id="IPR006809">
    <property type="entry name" value="TAFII28_dom"/>
</dbReference>
<dbReference type="PANTHER" id="PTHR13218:SF18">
    <property type="entry name" value="TATA-BOX-BINDING PROTEIN-ASSOCIATED FACTOR 11-LIKE PROTEIN 10-RELATED"/>
    <property type="match status" value="1"/>
</dbReference>
<dbReference type="PANTHER" id="PTHR13218">
    <property type="entry name" value="TRANSCRIPTION INITIATION FACTOR TFIID SUBUNIT 11-RELATED"/>
    <property type="match status" value="1"/>
</dbReference>
<dbReference type="Pfam" id="PF04719">
    <property type="entry name" value="TAFII28"/>
    <property type="match status" value="1"/>
</dbReference>
<dbReference type="SUPFAM" id="SSF47113">
    <property type="entry name" value="Histone-fold"/>
    <property type="match status" value="1"/>
</dbReference>
<reference key="1">
    <citation type="journal article" date="2004" name="Nature">
        <title>The DNA sequence and comparative analysis of human chromosome 5.</title>
        <authorList>
            <person name="Schmutz J."/>
            <person name="Martin J."/>
            <person name="Terry A."/>
            <person name="Couronne O."/>
            <person name="Grimwood J."/>
            <person name="Lowry S."/>
            <person name="Gordon L.A."/>
            <person name="Scott D."/>
            <person name="Xie G."/>
            <person name="Huang W."/>
            <person name="Hellsten U."/>
            <person name="Tran-Gyamfi M."/>
            <person name="She X."/>
            <person name="Prabhakar S."/>
            <person name="Aerts A."/>
            <person name="Altherr M."/>
            <person name="Bajorek E."/>
            <person name="Black S."/>
            <person name="Branscomb E."/>
            <person name="Caoile C."/>
            <person name="Challacombe J.F."/>
            <person name="Chan Y.M."/>
            <person name="Denys M."/>
            <person name="Detter J.C."/>
            <person name="Escobar J."/>
            <person name="Flowers D."/>
            <person name="Fotopulos D."/>
            <person name="Glavina T."/>
            <person name="Gomez M."/>
            <person name="Gonzales E."/>
            <person name="Goodstein D."/>
            <person name="Grigoriev I."/>
            <person name="Groza M."/>
            <person name="Hammon N."/>
            <person name="Hawkins T."/>
            <person name="Haydu L."/>
            <person name="Israni S."/>
            <person name="Jett J."/>
            <person name="Kadner K."/>
            <person name="Kimball H."/>
            <person name="Kobayashi A."/>
            <person name="Lopez F."/>
            <person name="Lou Y."/>
            <person name="Martinez D."/>
            <person name="Medina C."/>
            <person name="Morgan J."/>
            <person name="Nandkeshwar R."/>
            <person name="Noonan J.P."/>
            <person name="Pitluck S."/>
            <person name="Pollard M."/>
            <person name="Predki P."/>
            <person name="Priest J."/>
            <person name="Ramirez L."/>
            <person name="Retterer J."/>
            <person name="Rodriguez A."/>
            <person name="Rogers S."/>
            <person name="Salamov A."/>
            <person name="Salazar A."/>
            <person name="Thayer N."/>
            <person name="Tice H."/>
            <person name="Tsai M."/>
            <person name="Ustaszewska A."/>
            <person name="Vo N."/>
            <person name="Wheeler J."/>
            <person name="Wu K."/>
            <person name="Yang J."/>
            <person name="Dickson M."/>
            <person name="Cheng J.-F."/>
            <person name="Eichler E.E."/>
            <person name="Olsen A."/>
            <person name="Pennacchio L.A."/>
            <person name="Rokhsar D.S."/>
            <person name="Richardson P."/>
            <person name="Lucas S.M."/>
            <person name="Myers R.M."/>
            <person name="Rubin E.M."/>
        </authorList>
    </citation>
    <scope>NUCLEOTIDE SEQUENCE [LARGE SCALE GENOMIC DNA]</scope>
</reference>
<reference key="2">
    <citation type="journal article" date="2010" name="BMC Genomics">
        <title>Expression, tandem repeat copy number variation and stability of four macrosatellite arrays in the human genome.</title>
        <authorList>
            <person name="Tremblay D.C."/>
            <person name="Alexander G. Jr."/>
            <person name="Moseley S."/>
            <person name="Chadwick B.P."/>
        </authorList>
    </citation>
    <scope>TISSUE SPECIFICITY</scope>
</reference>